<protein>
    <recommendedName>
        <fullName evidence="1">3-phosphoshikimate 1-carboxyvinyltransferase</fullName>
        <ecNumber evidence="1">2.5.1.19</ecNumber>
    </recommendedName>
    <alternativeName>
        <fullName evidence="1">5-enolpyruvylshikimate-3-phosphate synthase</fullName>
        <shortName evidence="1">EPSP synthase</shortName>
        <shortName evidence="1">EPSPS</shortName>
    </alternativeName>
</protein>
<keyword id="KW-0028">Amino-acid biosynthesis</keyword>
<keyword id="KW-0057">Aromatic amino acid biosynthesis</keyword>
<keyword id="KW-0963">Cytoplasm</keyword>
<keyword id="KW-1185">Reference proteome</keyword>
<keyword id="KW-0808">Transferase</keyword>
<proteinExistence type="inferred from homology"/>
<dbReference type="EC" id="2.5.1.19" evidence="1"/>
<dbReference type="EMBL" id="CP001173">
    <property type="protein sequence ID" value="ACI27749.1"/>
    <property type="molecule type" value="Genomic_DNA"/>
</dbReference>
<dbReference type="RefSeq" id="WP_000570879.1">
    <property type="nucleotide sequence ID" value="NC_011333.1"/>
</dbReference>
<dbReference type="SMR" id="B5Z850"/>
<dbReference type="KEGG" id="hpg:HPG27_996"/>
<dbReference type="HOGENOM" id="CLU_024321_0_1_7"/>
<dbReference type="UniPathway" id="UPA00053">
    <property type="reaction ID" value="UER00089"/>
</dbReference>
<dbReference type="Proteomes" id="UP000001735">
    <property type="component" value="Chromosome"/>
</dbReference>
<dbReference type="GO" id="GO:0005737">
    <property type="term" value="C:cytoplasm"/>
    <property type="evidence" value="ECO:0007669"/>
    <property type="project" value="UniProtKB-SubCell"/>
</dbReference>
<dbReference type="GO" id="GO:0003866">
    <property type="term" value="F:3-phosphoshikimate 1-carboxyvinyltransferase activity"/>
    <property type="evidence" value="ECO:0007669"/>
    <property type="project" value="UniProtKB-UniRule"/>
</dbReference>
<dbReference type="GO" id="GO:0008652">
    <property type="term" value="P:amino acid biosynthetic process"/>
    <property type="evidence" value="ECO:0007669"/>
    <property type="project" value="UniProtKB-KW"/>
</dbReference>
<dbReference type="GO" id="GO:0009073">
    <property type="term" value="P:aromatic amino acid family biosynthetic process"/>
    <property type="evidence" value="ECO:0007669"/>
    <property type="project" value="UniProtKB-KW"/>
</dbReference>
<dbReference type="GO" id="GO:0009423">
    <property type="term" value="P:chorismate biosynthetic process"/>
    <property type="evidence" value="ECO:0007669"/>
    <property type="project" value="UniProtKB-UniRule"/>
</dbReference>
<dbReference type="CDD" id="cd01556">
    <property type="entry name" value="EPSP_synthase"/>
    <property type="match status" value="1"/>
</dbReference>
<dbReference type="FunFam" id="3.65.10.10:FF:000005">
    <property type="entry name" value="3-phosphoshikimate 1-carboxyvinyltransferase"/>
    <property type="match status" value="1"/>
</dbReference>
<dbReference type="Gene3D" id="3.65.10.10">
    <property type="entry name" value="Enolpyruvate transferase domain"/>
    <property type="match status" value="2"/>
</dbReference>
<dbReference type="HAMAP" id="MF_00210">
    <property type="entry name" value="EPSP_synth"/>
    <property type="match status" value="1"/>
</dbReference>
<dbReference type="InterPro" id="IPR001986">
    <property type="entry name" value="Enolpyruvate_Tfrase_dom"/>
</dbReference>
<dbReference type="InterPro" id="IPR036968">
    <property type="entry name" value="Enolpyruvate_Tfrase_sf"/>
</dbReference>
<dbReference type="InterPro" id="IPR006264">
    <property type="entry name" value="EPSP_synthase"/>
</dbReference>
<dbReference type="InterPro" id="IPR023193">
    <property type="entry name" value="EPSP_synthase_CS"/>
</dbReference>
<dbReference type="InterPro" id="IPR013792">
    <property type="entry name" value="RNA3'P_cycl/enolpyr_Trfase_a/b"/>
</dbReference>
<dbReference type="NCBIfam" id="TIGR01356">
    <property type="entry name" value="aroA"/>
    <property type="match status" value="1"/>
</dbReference>
<dbReference type="PANTHER" id="PTHR21090">
    <property type="entry name" value="AROM/DEHYDROQUINATE SYNTHASE"/>
    <property type="match status" value="1"/>
</dbReference>
<dbReference type="PANTHER" id="PTHR21090:SF5">
    <property type="entry name" value="PENTAFUNCTIONAL AROM POLYPEPTIDE"/>
    <property type="match status" value="1"/>
</dbReference>
<dbReference type="Pfam" id="PF00275">
    <property type="entry name" value="EPSP_synthase"/>
    <property type="match status" value="1"/>
</dbReference>
<dbReference type="PIRSF" id="PIRSF000505">
    <property type="entry name" value="EPSPS"/>
    <property type="match status" value="1"/>
</dbReference>
<dbReference type="SUPFAM" id="SSF55205">
    <property type="entry name" value="EPT/RTPC-like"/>
    <property type="match status" value="1"/>
</dbReference>
<dbReference type="PROSITE" id="PS00104">
    <property type="entry name" value="EPSP_SYNTHASE_1"/>
    <property type="match status" value="1"/>
</dbReference>
<dbReference type="PROSITE" id="PS00885">
    <property type="entry name" value="EPSP_SYNTHASE_2"/>
    <property type="match status" value="1"/>
</dbReference>
<gene>
    <name evidence="1" type="primary">aroA</name>
    <name type="ordered locus">HPG27_996</name>
</gene>
<feature type="chain" id="PRO_1000099706" description="3-phosphoshikimate 1-carboxyvinyltransferase">
    <location>
        <begin position="1"/>
        <end position="429"/>
    </location>
</feature>
<feature type="active site" description="Proton acceptor" evidence="1">
    <location>
        <position position="302"/>
    </location>
</feature>
<feature type="binding site" evidence="1">
    <location>
        <position position="11"/>
    </location>
    <ligand>
        <name>3-phosphoshikimate</name>
        <dbReference type="ChEBI" id="CHEBI:145989"/>
    </ligand>
</feature>
<feature type="binding site" evidence="1">
    <location>
        <position position="11"/>
    </location>
    <ligand>
        <name>phosphoenolpyruvate</name>
        <dbReference type="ChEBI" id="CHEBI:58702"/>
    </ligand>
</feature>
<feature type="binding site" evidence="1">
    <location>
        <position position="12"/>
    </location>
    <ligand>
        <name>3-phosphoshikimate</name>
        <dbReference type="ChEBI" id="CHEBI:145989"/>
    </ligand>
</feature>
<feature type="binding site" evidence="1">
    <location>
        <position position="16"/>
    </location>
    <ligand>
        <name>3-phosphoshikimate</name>
        <dbReference type="ChEBI" id="CHEBI:145989"/>
    </ligand>
</feature>
<feature type="binding site" evidence="1">
    <location>
        <position position="82"/>
    </location>
    <ligand>
        <name>phosphoenolpyruvate</name>
        <dbReference type="ChEBI" id="CHEBI:58702"/>
    </ligand>
</feature>
<feature type="binding site" evidence="1">
    <location>
        <position position="110"/>
    </location>
    <ligand>
        <name>phosphoenolpyruvate</name>
        <dbReference type="ChEBI" id="CHEBI:58702"/>
    </ligand>
</feature>
<feature type="binding site" evidence="1">
    <location>
        <position position="155"/>
    </location>
    <ligand>
        <name>3-phosphoshikimate</name>
        <dbReference type="ChEBI" id="CHEBI:145989"/>
    </ligand>
</feature>
<feature type="binding site" evidence="1">
    <location>
        <position position="157"/>
    </location>
    <ligand>
        <name>3-phosphoshikimate</name>
        <dbReference type="ChEBI" id="CHEBI:145989"/>
    </ligand>
</feature>
<feature type="binding site" evidence="1">
    <location>
        <position position="157"/>
    </location>
    <ligand>
        <name>phosphoenolpyruvate</name>
        <dbReference type="ChEBI" id="CHEBI:58702"/>
    </ligand>
</feature>
<feature type="binding site" evidence="1">
    <location>
        <position position="302"/>
    </location>
    <ligand>
        <name>3-phosphoshikimate</name>
        <dbReference type="ChEBI" id="CHEBI:145989"/>
    </ligand>
</feature>
<feature type="binding site" evidence="1">
    <location>
        <position position="329"/>
    </location>
    <ligand>
        <name>3-phosphoshikimate</name>
        <dbReference type="ChEBI" id="CHEBI:145989"/>
    </ligand>
</feature>
<feature type="binding site" evidence="1">
    <location>
        <position position="333"/>
    </location>
    <ligand>
        <name>phosphoenolpyruvate</name>
        <dbReference type="ChEBI" id="CHEBI:58702"/>
    </ligand>
</feature>
<feature type="binding site" evidence="1">
    <location>
        <position position="385"/>
    </location>
    <ligand>
        <name>phosphoenolpyruvate</name>
        <dbReference type="ChEBI" id="CHEBI:58702"/>
    </ligand>
</feature>
<reference key="1">
    <citation type="journal article" date="2009" name="J. Bacteriol.">
        <title>The complete genome sequence of Helicobacter pylori strain G27.</title>
        <authorList>
            <person name="Baltrus D.A."/>
            <person name="Amieva M.R."/>
            <person name="Covacci A."/>
            <person name="Lowe T.M."/>
            <person name="Merrell D.S."/>
            <person name="Ottemann K.M."/>
            <person name="Stein M."/>
            <person name="Salama N.R."/>
            <person name="Guillemin K."/>
        </authorList>
    </citation>
    <scope>NUCLEOTIDE SEQUENCE [LARGE SCALE GENOMIC DNA]</scope>
    <source>
        <strain>G27</strain>
    </source>
</reference>
<name>AROA_HELPG</name>
<sequence>MIELDINASDKSLSHRAVIFSLLAQKPCFVRNFLMGEDCLSSLEIAQNLGAKVENTAKNSFKITPPTAIKEPNKILNCNNSGTSMRLYSGLLSAQKGLFVLSGDNSLNARPMKRIIEPLKAFGAKILGREDNHFAPLAILGSPLKACDYESPIASAQVKSAFILSALQAQGISAYKENELSRNHTEIMLKSLGADIQNQNGVLMISPLEKPLEAFDFTIANDPSSAFFFALACAITPKSRLLLKNVLLNPTRIEAFEVLKKMGASIEYAIQSKDLEIIGDIYIEHAPLKAISIDQNIASLIDEIPALSIAMLFAKGKSMVKNAKDLRSKESDRIKAVVSNLKALGIECEEFEDGFYIEGLEDISPLKQHLSQKKPPLIQSFNDHRIAMSFAILTLALPLEIDNLECANISFPQFKRLLNQFKKGSFNGN</sequence>
<comment type="function">
    <text evidence="1">Catalyzes the transfer of the enolpyruvyl moiety of phosphoenolpyruvate (PEP) to the 5-hydroxyl of shikimate-3-phosphate (S3P) to produce enolpyruvyl shikimate-3-phosphate and inorganic phosphate.</text>
</comment>
<comment type="catalytic activity">
    <reaction evidence="1">
        <text>3-phosphoshikimate + phosphoenolpyruvate = 5-O-(1-carboxyvinyl)-3-phosphoshikimate + phosphate</text>
        <dbReference type="Rhea" id="RHEA:21256"/>
        <dbReference type="ChEBI" id="CHEBI:43474"/>
        <dbReference type="ChEBI" id="CHEBI:57701"/>
        <dbReference type="ChEBI" id="CHEBI:58702"/>
        <dbReference type="ChEBI" id="CHEBI:145989"/>
        <dbReference type="EC" id="2.5.1.19"/>
    </reaction>
    <physiologicalReaction direction="left-to-right" evidence="1">
        <dbReference type="Rhea" id="RHEA:21257"/>
    </physiologicalReaction>
</comment>
<comment type="pathway">
    <text evidence="1">Metabolic intermediate biosynthesis; chorismate biosynthesis; chorismate from D-erythrose 4-phosphate and phosphoenolpyruvate: step 6/7.</text>
</comment>
<comment type="subunit">
    <text evidence="1">Monomer.</text>
</comment>
<comment type="subcellular location">
    <subcellularLocation>
        <location evidence="1">Cytoplasm</location>
    </subcellularLocation>
</comment>
<comment type="similarity">
    <text evidence="1">Belongs to the EPSP synthase family.</text>
</comment>
<accession>B5Z850</accession>
<evidence type="ECO:0000255" key="1">
    <source>
        <dbReference type="HAMAP-Rule" id="MF_00210"/>
    </source>
</evidence>
<organism>
    <name type="scientific">Helicobacter pylori (strain G27)</name>
    <dbReference type="NCBI Taxonomy" id="563041"/>
    <lineage>
        <taxon>Bacteria</taxon>
        <taxon>Pseudomonadati</taxon>
        <taxon>Campylobacterota</taxon>
        <taxon>Epsilonproteobacteria</taxon>
        <taxon>Campylobacterales</taxon>
        <taxon>Helicobacteraceae</taxon>
        <taxon>Helicobacter</taxon>
    </lineage>
</organism>